<protein>
    <recommendedName>
        <fullName evidence="1">NADH-quinone oxidoreductase subunit B</fullName>
        <ecNumber evidence="1">7.1.1.-</ecNumber>
    </recommendedName>
    <alternativeName>
        <fullName evidence="1">NADH dehydrogenase I subunit B</fullName>
    </alternativeName>
    <alternativeName>
        <fullName evidence="1">NDH-1 subunit B</fullName>
    </alternativeName>
</protein>
<organism>
    <name type="scientific">Methylobacterium sp. (strain 4-46)</name>
    <dbReference type="NCBI Taxonomy" id="426117"/>
    <lineage>
        <taxon>Bacteria</taxon>
        <taxon>Pseudomonadati</taxon>
        <taxon>Pseudomonadota</taxon>
        <taxon>Alphaproteobacteria</taxon>
        <taxon>Hyphomicrobiales</taxon>
        <taxon>Methylobacteriaceae</taxon>
        <taxon>Methylobacterium</taxon>
    </lineage>
</organism>
<accession>B0ULK5</accession>
<comment type="function">
    <text evidence="1">NDH-1 shuttles electrons from NADH, via FMN and iron-sulfur (Fe-S) centers, to quinones in the respiratory chain. The immediate electron acceptor for the enzyme in this species is believed to be ubiquinone. Couples the redox reaction to proton translocation (for every two electrons transferred, four hydrogen ions are translocated across the cytoplasmic membrane), and thus conserves the redox energy in a proton gradient.</text>
</comment>
<comment type="catalytic activity">
    <reaction evidence="1">
        <text>a quinone + NADH + 5 H(+)(in) = a quinol + NAD(+) + 4 H(+)(out)</text>
        <dbReference type="Rhea" id="RHEA:57888"/>
        <dbReference type="ChEBI" id="CHEBI:15378"/>
        <dbReference type="ChEBI" id="CHEBI:24646"/>
        <dbReference type="ChEBI" id="CHEBI:57540"/>
        <dbReference type="ChEBI" id="CHEBI:57945"/>
        <dbReference type="ChEBI" id="CHEBI:132124"/>
    </reaction>
</comment>
<comment type="cofactor">
    <cofactor evidence="1">
        <name>[4Fe-4S] cluster</name>
        <dbReference type="ChEBI" id="CHEBI:49883"/>
    </cofactor>
    <text evidence="1">Binds 1 [4Fe-4S] cluster.</text>
</comment>
<comment type="subunit">
    <text evidence="1">NDH-1 is composed of 14 different subunits. Subunits NuoB, C, D, E, F, and G constitute the peripheral sector of the complex.</text>
</comment>
<comment type="subcellular location">
    <subcellularLocation>
        <location evidence="1">Cell inner membrane</location>
        <topology evidence="1">Peripheral membrane protein</topology>
        <orientation evidence="1">Cytoplasmic side</orientation>
    </subcellularLocation>
</comment>
<comment type="similarity">
    <text evidence="1">Belongs to the complex I 20 kDa subunit family.</text>
</comment>
<sequence>MALDTPLSRAPAIAPEPKGILDPATGLPIGATDPTFLSINDELADRGFLLTTADDLITWARTGSLMWMTFGLACCAVEMMQMSMPRYDAERFGFAPRASPRQSDVMIVAGTLTNKMAPALRKVYDQMPEPRYVISMGSCANGGGYYHYSYSVVRGCDRVVPVDIYVPGCPPSAEALLYGVLLLQKKIRRTGTIER</sequence>
<feature type="chain" id="PRO_0000376271" description="NADH-quinone oxidoreductase subunit B">
    <location>
        <begin position="1"/>
        <end position="195"/>
    </location>
</feature>
<feature type="binding site" evidence="1">
    <location>
        <position position="74"/>
    </location>
    <ligand>
        <name>[4Fe-4S] cluster</name>
        <dbReference type="ChEBI" id="CHEBI:49883"/>
    </ligand>
</feature>
<feature type="binding site" evidence="1">
    <location>
        <position position="75"/>
    </location>
    <ligand>
        <name>[4Fe-4S] cluster</name>
        <dbReference type="ChEBI" id="CHEBI:49883"/>
    </ligand>
</feature>
<feature type="binding site" evidence="1">
    <location>
        <position position="139"/>
    </location>
    <ligand>
        <name>[4Fe-4S] cluster</name>
        <dbReference type="ChEBI" id="CHEBI:49883"/>
    </ligand>
</feature>
<feature type="binding site" evidence="1">
    <location>
        <position position="169"/>
    </location>
    <ligand>
        <name>[4Fe-4S] cluster</name>
        <dbReference type="ChEBI" id="CHEBI:49883"/>
    </ligand>
</feature>
<proteinExistence type="inferred from homology"/>
<name>NUOB_METS4</name>
<keyword id="KW-0004">4Fe-4S</keyword>
<keyword id="KW-0997">Cell inner membrane</keyword>
<keyword id="KW-1003">Cell membrane</keyword>
<keyword id="KW-0408">Iron</keyword>
<keyword id="KW-0411">Iron-sulfur</keyword>
<keyword id="KW-0472">Membrane</keyword>
<keyword id="KW-0479">Metal-binding</keyword>
<keyword id="KW-0520">NAD</keyword>
<keyword id="KW-0874">Quinone</keyword>
<keyword id="KW-1278">Translocase</keyword>
<keyword id="KW-0813">Transport</keyword>
<keyword id="KW-0830">Ubiquinone</keyword>
<dbReference type="EC" id="7.1.1.-" evidence="1"/>
<dbReference type="EMBL" id="CP000943">
    <property type="protein sequence ID" value="ACA18733.1"/>
    <property type="molecule type" value="Genomic_DNA"/>
</dbReference>
<dbReference type="RefSeq" id="WP_012334122.1">
    <property type="nucleotide sequence ID" value="NC_010511.1"/>
</dbReference>
<dbReference type="SMR" id="B0ULK5"/>
<dbReference type="STRING" id="426117.M446_4391"/>
<dbReference type="KEGG" id="met:M446_4391"/>
<dbReference type="eggNOG" id="COG0377">
    <property type="taxonomic scope" value="Bacteria"/>
</dbReference>
<dbReference type="HOGENOM" id="CLU_055737_7_0_5"/>
<dbReference type="GO" id="GO:0005886">
    <property type="term" value="C:plasma membrane"/>
    <property type="evidence" value="ECO:0007669"/>
    <property type="project" value="UniProtKB-SubCell"/>
</dbReference>
<dbReference type="GO" id="GO:0045271">
    <property type="term" value="C:respiratory chain complex I"/>
    <property type="evidence" value="ECO:0007669"/>
    <property type="project" value="TreeGrafter"/>
</dbReference>
<dbReference type="GO" id="GO:0051539">
    <property type="term" value="F:4 iron, 4 sulfur cluster binding"/>
    <property type="evidence" value="ECO:0007669"/>
    <property type="project" value="UniProtKB-KW"/>
</dbReference>
<dbReference type="GO" id="GO:0005506">
    <property type="term" value="F:iron ion binding"/>
    <property type="evidence" value="ECO:0007669"/>
    <property type="project" value="UniProtKB-UniRule"/>
</dbReference>
<dbReference type="GO" id="GO:0008137">
    <property type="term" value="F:NADH dehydrogenase (ubiquinone) activity"/>
    <property type="evidence" value="ECO:0007669"/>
    <property type="project" value="InterPro"/>
</dbReference>
<dbReference type="GO" id="GO:0050136">
    <property type="term" value="F:NADH:ubiquinone reductase (non-electrogenic) activity"/>
    <property type="evidence" value="ECO:0007669"/>
    <property type="project" value="UniProtKB-UniRule"/>
</dbReference>
<dbReference type="GO" id="GO:0048038">
    <property type="term" value="F:quinone binding"/>
    <property type="evidence" value="ECO:0007669"/>
    <property type="project" value="UniProtKB-KW"/>
</dbReference>
<dbReference type="GO" id="GO:0009060">
    <property type="term" value="P:aerobic respiration"/>
    <property type="evidence" value="ECO:0007669"/>
    <property type="project" value="TreeGrafter"/>
</dbReference>
<dbReference type="GO" id="GO:0015990">
    <property type="term" value="P:electron transport coupled proton transport"/>
    <property type="evidence" value="ECO:0007669"/>
    <property type="project" value="TreeGrafter"/>
</dbReference>
<dbReference type="FunFam" id="3.40.50.12280:FF:000001">
    <property type="entry name" value="NADH-quinone oxidoreductase subunit B 2"/>
    <property type="match status" value="1"/>
</dbReference>
<dbReference type="Gene3D" id="3.40.50.12280">
    <property type="match status" value="1"/>
</dbReference>
<dbReference type="HAMAP" id="MF_01356">
    <property type="entry name" value="NDH1_NuoB"/>
    <property type="match status" value="1"/>
</dbReference>
<dbReference type="InterPro" id="IPR006137">
    <property type="entry name" value="NADH_UbQ_OxRdtase-like_20kDa"/>
</dbReference>
<dbReference type="InterPro" id="IPR006138">
    <property type="entry name" value="NADH_UQ_OxRdtase_20Kd_su"/>
</dbReference>
<dbReference type="NCBIfam" id="TIGR01957">
    <property type="entry name" value="nuoB_fam"/>
    <property type="match status" value="1"/>
</dbReference>
<dbReference type="NCBIfam" id="NF005012">
    <property type="entry name" value="PRK06411.1"/>
    <property type="match status" value="1"/>
</dbReference>
<dbReference type="PANTHER" id="PTHR11995">
    <property type="entry name" value="NADH DEHYDROGENASE"/>
    <property type="match status" value="1"/>
</dbReference>
<dbReference type="PANTHER" id="PTHR11995:SF14">
    <property type="entry name" value="NADH DEHYDROGENASE [UBIQUINONE] IRON-SULFUR PROTEIN 7, MITOCHONDRIAL"/>
    <property type="match status" value="1"/>
</dbReference>
<dbReference type="Pfam" id="PF01058">
    <property type="entry name" value="Oxidored_q6"/>
    <property type="match status" value="1"/>
</dbReference>
<dbReference type="SUPFAM" id="SSF56770">
    <property type="entry name" value="HydA/Nqo6-like"/>
    <property type="match status" value="1"/>
</dbReference>
<dbReference type="PROSITE" id="PS01150">
    <property type="entry name" value="COMPLEX1_20K"/>
    <property type="match status" value="1"/>
</dbReference>
<gene>
    <name evidence="1" type="primary">nuoB</name>
    <name type="ordered locus">M446_4391</name>
</gene>
<evidence type="ECO:0000255" key="1">
    <source>
        <dbReference type="HAMAP-Rule" id="MF_01356"/>
    </source>
</evidence>
<reference key="1">
    <citation type="submission" date="2008-02" db="EMBL/GenBank/DDBJ databases">
        <title>Complete sequence of chromosome of Methylobacterium sp. 4-46.</title>
        <authorList>
            <consortium name="US DOE Joint Genome Institute"/>
            <person name="Copeland A."/>
            <person name="Lucas S."/>
            <person name="Lapidus A."/>
            <person name="Glavina del Rio T."/>
            <person name="Dalin E."/>
            <person name="Tice H."/>
            <person name="Bruce D."/>
            <person name="Goodwin L."/>
            <person name="Pitluck S."/>
            <person name="Chertkov O."/>
            <person name="Brettin T."/>
            <person name="Detter J.C."/>
            <person name="Han C."/>
            <person name="Kuske C.R."/>
            <person name="Schmutz J."/>
            <person name="Larimer F."/>
            <person name="Land M."/>
            <person name="Hauser L."/>
            <person name="Kyrpides N."/>
            <person name="Ivanova N."/>
            <person name="Marx C.J."/>
            <person name="Richardson P."/>
        </authorList>
    </citation>
    <scope>NUCLEOTIDE SEQUENCE [LARGE SCALE GENOMIC DNA]</scope>
    <source>
        <strain>4-46</strain>
    </source>
</reference>